<evidence type="ECO:0000255" key="1">
    <source>
        <dbReference type="HAMAP-Rule" id="MF_00198"/>
    </source>
</evidence>
<dbReference type="EC" id="2.5.1.16" evidence="1"/>
<dbReference type="EMBL" id="AL157959">
    <property type="protein sequence ID" value="CAM08298.1"/>
    <property type="molecule type" value="Genomic_DNA"/>
</dbReference>
<dbReference type="PIR" id="E81148">
    <property type="entry name" value="E81148"/>
</dbReference>
<dbReference type="RefSeq" id="WP_002225376.1">
    <property type="nucleotide sequence ID" value="NC_003116.1"/>
</dbReference>
<dbReference type="SMR" id="P60593"/>
<dbReference type="EnsemblBacteria" id="CAM08298">
    <property type="protein sequence ID" value="CAM08298"/>
    <property type="gene ID" value="NMA1087"/>
</dbReference>
<dbReference type="KEGG" id="nma:NMA1087"/>
<dbReference type="HOGENOM" id="CLU_060070_1_0_4"/>
<dbReference type="UniPathway" id="UPA00248">
    <property type="reaction ID" value="UER00314"/>
</dbReference>
<dbReference type="Proteomes" id="UP000000626">
    <property type="component" value="Chromosome"/>
</dbReference>
<dbReference type="GO" id="GO:0005737">
    <property type="term" value="C:cytoplasm"/>
    <property type="evidence" value="ECO:0007669"/>
    <property type="project" value="UniProtKB-SubCell"/>
</dbReference>
<dbReference type="GO" id="GO:0004766">
    <property type="term" value="F:spermidine synthase activity"/>
    <property type="evidence" value="ECO:0007669"/>
    <property type="project" value="UniProtKB-UniRule"/>
</dbReference>
<dbReference type="GO" id="GO:0010487">
    <property type="term" value="F:thermospermine synthase activity"/>
    <property type="evidence" value="ECO:0007669"/>
    <property type="project" value="UniProtKB-ARBA"/>
</dbReference>
<dbReference type="GO" id="GO:0008295">
    <property type="term" value="P:spermidine biosynthetic process"/>
    <property type="evidence" value="ECO:0007669"/>
    <property type="project" value="UniProtKB-UniRule"/>
</dbReference>
<dbReference type="CDD" id="cd02440">
    <property type="entry name" value="AdoMet_MTases"/>
    <property type="match status" value="1"/>
</dbReference>
<dbReference type="FunFam" id="3.40.50.150:FF:000476">
    <property type="entry name" value="Polyamine aminopropyltransferase"/>
    <property type="match status" value="1"/>
</dbReference>
<dbReference type="Gene3D" id="3.40.50.150">
    <property type="entry name" value="Vaccinia Virus protein VP39"/>
    <property type="match status" value="1"/>
</dbReference>
<dbReference type="HAMAP" id="MF_00198">
    <property type="entry name" value="Spermidine_synth"/>
    <property type="match status" value="1"/>
</dbReference>
<dbReference type="InterPro" id="IPR030374">
    <property type="entry name" value="PABS"/>
</dbReference>
<dbReference type="InterPro" id="IPR029063">
    <property type="entry name" value="SAM-dependent_MTases_sf"/>
</dbReference>
<dbReference type="InterPro" id="IPR001045">
    <property type="entry name" value="Spermi_synthase"/>
</dbReference>
<dbReference type="NCBIfam" id="NF037959">
    <property type="entry name" value="MFS_SpdSyn"/>
    <property type="match status" value="1"/>
</dbReference>
<dbReference type="NCBIfam" id="NF003380">
    <property type="entry name" value="PRK04457.1"/>
    <property type="match status" value="1"/>
</dbReference>
<dbReference type="PANTHER" id="PTHR43317">
    <property type="entry name" value="THERMOSPERMINE SYNTHASE ACAULIS5"/>
    <property type="match status" value="1"/>
</dbReference>
<dbReference type="PANTHER" id="PTHR43317:SF1">
    <property type="entry name" value="THERMOSPERMINE SYNTHASE ACAULIS5"/>
    <property type="match status" value="1"/>
</dbReference>
<dbReference type="Pfam" id="PF01564">
    <property type="entry name" value="Spermine_synth"/>
    <property type="match status" value="1"/>
</dbReference>
<dbReference type="SUPFAM" id="SSF53335">
    <property type="entry name" value="S-adenosyl-L-methionine-dependent methyltransferases"/>
    <property type="match status" value="1"/>
</dbReference>
<dbReference type="PROSITE" id="PS51006">
    <property type="entry name" value="PABS_2"/>
    <property type="match status" value="1"/>
</dbReference>
<protein>
    <recommendedName>
        <fullName evidence="1">Polyamine aminopropyltransferase</fullName>
    </recommendedName>
    <alternativeName>
        <fullName evidence="1">Putrescine aminopropyltransferase</fullName>
        <shortName evidence="1">PAPT</shortName>
    </alternativeName>
    <alternativeName>
        <fullName evidence="1">Spermidine synthase</fullName>
        <shortName evidence="1">SPDS</shortName>
        <shortName evidence="1">SPDSY</shortName>
        <ecNumber evidence="1">2.5.1.16</ecNumber>
    </alternativeName>
</protein>
<sequence length="263" mass="29734">MARHPYRRLRPAKSGFPEVGISEEGNIRSLHLGSDTVQSSMNLDHPSELVLSYSRAMMGWLLFTDALPQHITQIGLGGGSFARWIDTYLPDTRQTAVDINPQVIAIARNLFELPFEGEKFEIIEADGAEYIKVFRHNTDVILVDGFDGEQIIDALVEEPFFRDCRNALSSDGIFVTNWWSGDKRYQRFIERLLSVFEGRVLELPAESHGNVAVMAFQSSPKEQNIDKLKKRADKLSNAYGLDFHRMLAGLKASNPNNGKHFHL</sequence>
<feature type="chain" id="PRO_0000156489" description="Polyamine aminopropyltransferase">
    <location>
        <begin position="1"/>
        <end position="263"/>
    </location>
</feature>
<feature type="domain" description="PABS" evidence="1">
    <location>
        <begin position="1"/>
        <end position="221"/>
    </location>
</feature>
<feature type="active site" description="Proton acceptor" evidence="1">
    <location>
        <position position="144"/>
    </location>
</feature>
<feature type="binding site" evidence="1">
    <location>
        <position position="98"/>
    </location>
    <ligand>
        <name>S-methyl-5'-thioadenosine</name>
        <dbReference type="ChEBI" id="CHEBI:17509"/>
    </ligand>
</feature>
<feature type="binding site" evidence="1">
    <location>
        <begin position="126"/>
        <end position="127"/>
    </location>
    <ligand>
        <name>S-methyl-5'-thioadenosine</name>
        <dbReference type="ChEBI" id="CHEBI:17509"/>
    </ligand>
</feature>
<comment type="function">
    <text evidence="1">Catalyzes the irreversible transfer of a propylamine group from the amino donor S-adenosylmethioninamine (decarboxy-AdoMet) to putrescine (1,4-diaminobutane) to yield spermidine.</text>
</comment>
<comment type="catalytic activity">
    <reaction evidence="1">
        <text>S-adenosyl 3-(methylsulfanyl)propylamine + putrescine = S-methyl-5'-thioadenosine + spermidine + H(+)</text>
        <dbReference type="Rhea" id="RHEA:12721"/>
        <dbReference type="ChEBI" id="CHEBI:15378"/>
        <dbReference type="ChEBI" id="CHEBI:17509"/>
        <dbReference type="ChEBI" id="CHEBI:57443"/>
        <dbReference type="ChEBI" id="CHEBI:57834"/>
        <dbReference type="ChEBI" id="CHEBI:326268"/>
        <dbReference type="EC" id="2.5.1.16"/>
    </reaction>
</comment>
<comment type="pathway">
    <text evidence="1">Amine and polyamine biosynthesis; spermidine biosynthesis; spermidine from putrescine: step 1/1.</text>
</comment>
<comment type="subunit">
    <text evidence="1">Homodimer or homotetramer.</text>
</comment>
<comment type="subcellular location">
    <subcellularLocation>
        <location evidence="1">Cytoplasm</location>
    </subcellularLocation>
</comment>
<comment type="similarity">
    <text evidence="1">Belongs to the spermidine/spermine synthase family.</text>
</comment>
<gene>
    <name evidence="1" type="primary">speE</name>
    <name type="ordered locus">NMA1087</name>
</gene>
<keyword id="KW-0963">Cytoplasm</keyword>
<keyword id="KW-0620">Polyamine biosynthesis</keyword>
<keyword id="KW-0745">Spermidine biosynthesis</keyword>
<keyword id="KW-0808">Transferase</keyword>
<accession>P60593</accession>
<accession>A1IRB2</accession>
<accession>Q9JQL8</accession>
<reference key="1">
    <citation type="journal article" date="2000" name="Nature">
        <title>Complete DNA sequence of a serogroup A strain of Neisseria meningitidis Z2491.</title>
        <authorList>
            <person name="Parkhill J."/>
            <person name="Achtman M."/>
            <person name="James K.D."/>
            <person name="Bentley S.D."/>
            <person name="Churcher C.M."/>
            <person name="Klee S.R."/>
            <person name="Morelli G."/>
            <person name="Basham D."/>
            <person name="Brown D."/>
            <person name="Chillingworth T."/>
            <person name="Davies R.M."/>
            <person name="Davis P."/>
            <person name="Devlin K."/>
            <person name="Feltwell T."/>
            <person name="Hamlin N."/>
            <person name="Holroyd S."/>
            <person name="Jagels K."/>
            <person name="Leather S."/>
            <person name="Moule S."/>
            <person name="Mungall K.L."/>
            <person name="Quail M.A."/>
            <person name="Rajandream M.A."/>
            <person name="Rutherford K.M."/>
            <person name="Simmonds M."/>
            <person name="Skelton J."/>
            <person name="Whitehead S."/>
            <person name="Spratt B.G."/>
            <person name="Barrell B.G."/>
        </authorList>
    </citation>
    <scope>NUCLEOTIDE SEQUENCE [LARGE SCALE GENOMIC DNA]</scope>
    <source>
        <strain>DSM 15465 / Z2491</strain>
    </source>
</reference>
<proteinExistence type="inferred from homology"/>
<name>SPEE_NEIMA</name>
<organism>
    <name type="scientific">Neisseria meningitidis serogroup A / serotype 4A (strain DSM 15465 / Z2491)</name>
    <dbReference type="NCBI Taxonomy" id="122587"/>
    <lineage>
        <taxon>Bacteria</taxon>
        <taxon>Pseudomonadati</taxon>
        <taxon>Pseudomonadota</taxon>
        <taxon>Betaproteobacteria</taxon>
        <taxon>Neisseriales</taxon>
        <taxon>Neisseriaceae</taxon>
        <taxon>Neisseria</taxon>
    </lineage>
</organism>